<feature type="chain" id="PRO_0000295479" description="Protein transport protein sec24">
    <location>
        <begin position="1"/>
        <end position="913"/>
    </location>
</feature>
<feature type="region of interest" description="Disordered" evidence="2">
    <location>
        <begin position="1"/>
        <end position="44"/>
    </location>
</feature>
<feature type="region of interest" description="Zinc finger-like">
    <location>
        <begin position="238"/>
        <end position="263"/>
    </location>
</feature>
<feature type="compositionally biased region" description="Low complexity" evidence="2">
    <location>
        <begin position="1"/>
        <end position="37"/>
    </location>
</feature>
<feature type="binding site" evidence="1">
    <location>
        <position position="238"/>
    </location>
    <ligand>
        <name>Zn(2+)</name>
        <dbReference type="ChEBI" id="CHEBI:29105"/>
    </ligand>
</feature>
<feature type="binding site" evidence="1">
    <location>
        <position position="241"/>
    </location>
    <ligand>
        <name>Zn(2+)</name>
        <dbReference type="ChEBI" id="CHEBI:29105"/>
    </ligand>
</feature>
<feature type="binding site" evidence="1">
    <location>
        <position position="260"/>
    </location>
    <ligand>
        <name>Zn(2+)</name>
        <dbReference type="ChEBI" id="CHEBI:29105"/>
    </ligand>
</feature>
<feature type="binding site" evidence="1">
    <location>
        <position position="263"/>
    </location>
    <ligand>
        <name>Zn(2+)</name>
        <dbReference type="ChEBI" id="CHEBI:29105"/>
    </ligand>
</feature>
<dbReference type="EMBL" id="BA000050">
    <property type="protein sequence ID" value="BAE57585.1"/>
    <property type="molecule type" value="Genomic_DNA"/>
</dbReference>
<dbReference type="RefSeq" id="XP_001819587.1">
    <property type="nucleotide sequence ID" value="XM_001819535.2"/>
</dbReference>
<dbReference type="SMR" id="Q2ULI0"/>
<dbReference type="STRING" id="510516.Q2ULI0"/>
<dbReference type="EnsemblFungi" id="BAE57585">
    <property type="protein sequence ID" value="BAE57585"/>
    <property type="gene ID" value="AO090003000403"/>
</dbReference>
<dbReference type="GeneID" id="5991570"/>
<dbReference type="KEGG" id="aor:AO090003000403"/>
<dbReference type="VEuPathDB" id="FungiDB:AO090003000403"/>
<dbReference type="HOGENOM" id="CLU_004589_2_1_1"/>
<dbReference type="OMA" id="AVECSKQ"/>
<dbReference type="OrthoDB" id="78156at5052"/>
<dbReference type="Proteomes" id="UP000006564">
    <property type="component" value="Chromosome 2"/>
</dbReference>
<dbReference type="GO" id="GO:0005801">
    <property type="term" value="C:cis-Golgi network"/>
    <property type="evidence" value="ECO:0007669"/>
    <property type="project" value="EnsemblFungi"/>
</dbReference>
<dbReference type="GO" id="GO:0030127">
    <property type="term" value="C:COPII vesicle coat"/>
    <property type="evidence" value="ECO:0007669"/>
    <property type="project" value="InterPro"/>
</dbReference>
<dbReference type="GO" id="GO:0070971">
    <property type="term" value="C:endoplasmic reticulum exit site"/>
    <property type="evidence" value="ECO:0007669"/>
    <property type="project" value="EnsemblFungi"/>
</dbReference>
<dbReference type="GO" id="GO:0005789">
    <property type="term" value="C:endoplasmic reticulum membrane"/>
    <property type="evidence" value="ECO:0007669"/>
    <property type="project" value="UniProtKB-SubCell"/>
</dbReference>
<dbReference type="GO" id="GO:1990753">
    <property type="term" value="C:equatorial cell cortex"/>
    <property type="evidence" value="ECO:0007669"/>
    <property type="project" value="EnsemblFungi"/>
</dbReference>
<dbReference type="GO" id="GO:0000139">
    <property type="term" value="C:Golgi membrane"/>
    <property type="evidence" value="ECO:0007669"/>
    <property type="project" value="UniProtKB-SubCell"/>
</dbReference>
<dbReference type="GO" id="GO:0000149">
    <property type="term" value="F:SNARE binding"/>
    <property type="evidence" value="ECO:0007669"/>
    <property type="project" value="TreeGrafter"/>
</dbReference>
<dbReference type="GO" id="GO:0008270">
    <property type="term" value="F:zinc ion binding"/>
    <property type="evidence" value="ECO:0007669"/>
    <property type="project" value="InterPro"/>
</dbReference>
<dbReference type="GO" id="GO:0090110">
    <property type="term" value="P:COPII-coated vesicle cargo loading"/>
    <property type="evidence" value="ECO:0007669"/>
    <property type="project" value="TreeGrafter"/>
</dbReference>
<dbReference type="GO" id="GO:0006886">
    <property type="term" value="P:intracellular protein transport"/>
    <property type="evidence" value="ECO:0007669"/>
    <property type="project" value="InterPro"/>
</dbReference>
<dbReference type="CDD" id="cd01479">
    <property type="entry name" value="Sec24-like"/>
    <property type="match status" value="1"/>
</dbReference>
<dbReference type="Gene3D" id="2.60.40.1670">
    <property type="entry name" value="beta-sandwich domain of Sec23/24"/>
    <property type="match status" value="1"/>
</dbReference>
<dbReference type="Gene3D" id="1.20.120.730">
    <property type="entry name" value="Sec23/Sec24 helical domain"/>
    <property type="match status" value="1"/>
</dbReference>
<dbReference type="Gene3D" id="3.40.20.10">
    <property type="entry name" value="Severin"/>
    <property type="match status" value="1"/>
</dbReference>
<dbReference type="Gene3D" id="3.40.50.410">
    <property type="entry name" value="von Willebrand factor, type A domain"/>
    <property type="match status" value="1"/>
</dbReference>
<dbReference type="Gene3D" id="2.30.30.380">
    <property type="entry name" value="Zn-finger domain of Sec23/24"/>
    <property type="match status" value="1"/>
</dbReference>
<dbReference type="InterPro" id="IPR029006">
    <property type="entry name" value="ADF-H/Gelsolin-like_dom_sf"/>
</dbReference>
<dbReference type="InterPro" id="IPR007123">
    <property type="entry name" value="Gelsolin-like_dom"/>
</dbReference>
<dbReference type="InterPro" id="IPR036180">
    <property type="entry name" value="Gelsolin-like_dom_sf"/>
</dbReference>
<dbReference type="InterPro" id="IPR006900">
    <property type="entry name" value="Sec23/24_helical_dom"/>
</dbReference>
<dbReference type="InterPro" id="IPR036175">
    <property type="entry name" value="Sec23/24_helical_dom_sf"/>
</dbReference>
<dbReference type="InterPro" id="IPR006896">
    <property type="entry name" value="Sec23/24_trunk_dom"/>
</dbReference>
<dbReference type="InterPro" id="IPR012990">
    <property type="entry name" value="Sec23_24_beta_S"/>
</dbReference>
<dbReference type="InterPro" id="IPR050550">
    <property type="entry name" value="SEC23_SEC24_subfamily"/>
</dbReference>
<dbReference type="InterPro" id="IPR041742">
    <property type="entry name" value="Sec24-like_trunk_dom"/>
</dbReference>
<dbReference type="InterPro" id="IPR036465">
    <property type="entry name" value="vWFA_dom_sf"/>
</dbReference>
<dbReference type="InterPro" id="IPR006895">
    <property type="entry name" value="Znf_Sec23_Sec24"/>
</dbReference>
<dbReference type="InterPro" id="IPR036174">
    <property type="entry name" value="Znf_Sec23_Sec24_sf"/>
</dbReference>
<dbReference type="PANTHER" id="PTHR13803">
    <property type="entry name" value="SEC24-RELATED PROTEIN"/>
    <property type="match status" value="1"/>
</dbReference>
<dbReference type="PANTHER" id="PTHR13803:SF39">
    <property type="entry name" value="SECRETORY 24AB, ISOFORM A"/>
    <property type="match status" value="1"/>
</dbReference>
<dbReference type="Pfam" id="PF00626">
    <property type="entry name" value="Gelsolin"/>
    <property type="match status" value="1"/>
</dbReference>
<dbReference type="Pfam" id="PF08033">
    <property type="entry name" value="Sec23_BS"/>
    <property type="match status" value="1"/>
</dbReference>
<dbReference type="Pfam" id="PF04815">
    <property type="entry name" value="Sec23_helical"/>
    <property type="match status" value="1"/>
</dbReference>
<dbReference type="Pfam" id="PF04811">
    <property type="entry name" value="Sec23_trunk"/>
    <property type="match status" value="1"/>
</dbReference>
<dbReference type="Pfam" id="PF04810">
    <property type="entry name" value="zf-Sec23_Sec24"/>
    <property type="match status" value="1"/>
</dbReference>
<dbReference type="SUPFAM" id="SSF81995">
    <property type="entry name" value="beta-sandwich domain of Sec23/24"/>
    <property type="match status" value="1"/>
</dbReference>
<dbReference type="SUPFAM" id="SSF82754">
    <property type="entry name" value="C-terminal, gelsolin-like domain of Sec23/24"/>
    <property type="match status" value="1"/>
</dbReference>
<dbReference type="SUPFAM" id="SSF81811">
    <property type="entry name" value="Helical domain of Sec23/24"/>
    <property type="match status" value="1"/>
</dbReference>
<dbReference type="SUPFAM" id="SSF53300">
    <property type="entry name" value="vWA-like"/>
    <property type="match status" value="1"/>
</dbReference>
<dbReference type="SUPFAM" id="SSF82919">
    <property type="entry name" value="Zn-finger domain of Sec23/24"/>
    <property type="match status" value="1"/>
</dbReference>
<reference key="1">
    <citation type="journal article" date="2005" name="Nature">
        <title>Genome sequencing and analysis of Aspergillus oryzae.</title>
        <authorList>
            <person name="Machida M."/>
            <person name="Asai K."/>
            <person name="Sano M."/>
            <person name="Tanaka T."/>
            <person name="Kumagai T."/>
            <person name="Terai G."/>
            <person name="Kusumoto K."/>
            <person name="Arima T."/>
            <person name="Akita O."/>
            <person name="Kashiwagi Y."/>
            <person name="Abe K."/>
            <person name="Gomi K."/>
            <person name="Horiuchi H."/>
            <person name="Kitamoto K."/>
            <person name="Kobayashi T."/>
            <person name="Takeuchi M."/>
            <person name="Denning D.W."/>
            <person name="Galagan J.E."/>
            <person name="Nierman W.C."/>
            <person name="Yu J."/>
            <person name="Archer D.B."/>
            <person name="Bennett J.W."/>
            <person name="Bhatnagar D."/>
            <person name="Cleveland T.E."/>
            <person name="Fedorova N.D."/>
            <person name="Gotoh O."/>
            <person name="Horikawa H."/>
            <person name="Hosoyama A."/>
            <person name="Ichinomiya M."/>
            <person name="Igarashi R."/>
            <person name="Iwashita K."/>
            <person name="Juvvadi P.R."/>
            <person name="Kato M."/>
            <person name="Kato Y."/>
            <person name="Kin T."/>
            <person name="Kokubun A."/>
            <person name="Maeda H."/>
            <person name="Maeyama N."/>
            <person name="Maruyama J."/>
            <person name="Nagasaki H."/>
            <person name="Nakajima T."/>
            <person name="Oda K."/>
            <person name="Okada K."/>
            <person name="Paulsen I."/>
            <person name="Sakamoto K."/>
            <person name="Sawano T."/>
            <person name="Takahashi M."/>
            <person name="Takase K."/>
            <person name="Terabayashi Y."/>
            <person name="Wortman J.R."/>
            <person name="Yamada O."/>
            <person name="Yamagata Y."/>
            <person name="Anazawa H."/>
            <person name="Hata Y."/>
            <person name="Koide Y."/>
            <person name="Komori T."/>
            <person name="Koyama Y."/>
            <person name="Minetoki T."/>
            <person name="Suharnan S."/>
            <person name="Tanaka A."/>
            <person name="Isono K."/>
            <person name="Kuhara S."/>
            <person name="Ogasawara N."/>
            <person name="Kikuchi H."/>
        </authorList>
    </citation>
    <scope>NUCLEOTIDE SEQUENCE [LARGE SCALE GENOMIC DNA]</scope>
    <source>
        <strain>ATCC 42149 / RIB 40</strain>
    </source>
</reference>
<comment type="function">
    <text evidence="1">Component of the coat protein complex II (COPII) which promotes the formation of transport vesicles from the endoplasmic reticulum (ER). The coat has two main functions, the physical deformation of the endoplasmic reticulum membrane into vesicles and the selection of cargo molecules (By similarity).</text>
</comment>
<comment type="subunit">
    <text evidence="1">The COPII coat is composed of at least 5 proteins: the sec23/24 complex, the sec13/31 complex, and the protein sar1. Golgi apparatus membrane; Peripheral membrane protein; Cytoplasmic side.</text>
</comment>
<comment type="subcellular location">
    <subcellularLocation>
        <location evidence="1">Cytoplasm</location>
    </subcellularLocation>
    <subcellularLocation>
        <location evidence="1">Cytoplasmic vesicle</location>
        <location evidence="1">COPII-coated vesicle membrane</location>
        <topology evidence="1">Peripheral membrane protein</topology>
        <orientation evidence="1">Cytoplasmic side</orientation>
    </subcellularLocation>
    <subcellularLocation>
        <location evidence="1">Endoplasmic reticulum membrane</location>
        <topology evidence="1">Peripheral membrane protein</topology>
        <orientation evidence="1">Cytoplasmic side</orientation>
    </subcellularLocation>
    <subcellularLocation>
        <location evidence="1">Golgi apparatus membrane</location>
        <topology evidence="1">Peripheral membrane protein</topology>
        <orientation evidence="1">Cytoplasmic side</orientation>
    </subcellularLocation>
</comment>
<comment type="similarity">
    <text evidence="3">Belongs to the SEC23/SEC24 family. SEC24 subfamily.</text>
</comment>
<proteinExistence type="inferred from homology"/>
<evidence type="ECO:0000250" key="1"/>
<evidence type="ECO:0000256" key="2">
    <source>
        <dbReference type="SAM" id="MobiDB-lite"/>
    </source>
</evidence>
<evidence type="ECO:0000305" key="3"/>
<organism>
    <name type="scientific">Aspergillus oryzae (strain ATCC 42149 / RIB 40)</name>
    <name type="common">Yellow koji mold</name>
    <dbReference type="NCBI Taxonomy" id="510516"/>
    <lineage>
        <taxon>Eukaryota</taxon>
        <taxon>Fungi</taxon>
        <taxon>Dikarya</taxon>
        <taxon>Ascomycota</taxon>
        <taxon>Pezizomycotina</taxon>
        <taxon>Eurotiomycetes</taxon>
        <taxon>Eurotiomycetidae</taxon>
        <taxon>Eurotiales</taxon>
        <taxon>Aspergillaceae</taxon>
        <taxon>Aspergillus</taxon>
        <taxon>Aspergillus subgen. Circumdati</taxon>
    </lineage>
</organism>
<name>SEC24_ASPOR</name>
<sequence>MAAPQGGYPPQEGYGQPAGYESPSQQAAGLAPAPAQHGGRKKRAYAGEAFELGSGANAGLGGQLPAGGTYGGYPAQPQAAGYQQPVYGADPTQMQAAAQGYAAPAAPAVAQMTQQFGAMGVTDPHLMPPQPVPQAAQAPRPVLNHLYPTDLLTQPFNVAELDYPPPPIVLPQGTSVYPSPTANCPPKYVRSTLNAVPTTHSLLKKSKLPFALVIQPYGALHDSEDQVPVIPDQVISRCRRCRSYINPFVTFLDHGHRWRCNMCNLTNDVPQAFDWDTTLQRPADRALRPDLNHAVVEFVAPQEYMVRPPQPLVYLFLIDVSYASVTNGLLATSARCIKESLERIPNADRRTRLGFIAVDSSLHYFSIPRDGSENSDPRMLVVSDLDEPFLPIPGDLLVTLSECRENIETFLDKLQEMFQNTQNNGCAMGSALRAGYKLIAPVGGKMTVLSSSLPNIGHGALTMREDKKVLGTSKESGLLQTANSFYKSFAVECSKAQVSVDMFLFSSQYQDVASLSNLPRYTGGQTYFYPGWNAARGEDAIKFAREFSEYLSSEIGLEAVLRVRATTGLRMSTFYGNFFNRSSDLCAFPAFPRDQAYVVEVAIDETVTKPVVCMQTAVLHTTCNGERRIRVLTLALPTTQSLADVYASADQQAIATYFSHKAVERALGSGLEPAREALQAKAVELLATYRKELAGGSVSGGGLQFPANLRGLPVLFLALIKNLGLRKSAQIPTDMRSAALCLLSTLPLPLLIQYIYPKMYSLHDMPDNAGLPDEQTGEIVLPPPVNLSSERVVPYGLYLIDDGQTQFLWVGRDAVPQLIVDVFGLPDKSQLRVGKQNLPDLDNDMNQRVRAVIEKSRDHRSKGCGSIVVPHLYVVKEDGEPGLRLWAQTMLVEDRADQGVSLVQWMGNLQEKV</sequence>
<keyword id="KW-0963">Cytoplasm</keyword>
<keyword id="KW-0968">Cytoplasmic vesicle</keyword>
<keyword id="KW-0256">Endoplasmic reticulum</keyword>
<keyword id="KW-0931">ER-Golgi transport</keyword>
<keyword id="KW-0333">Golgi apparatus</keyword>
<keyword id="KW-0472">Membrane</keyword>
<keyword id="KW-0479">Metal-binding</keyword>
<keyword id="KW-0653">Protein transport</keyword>
<keyword id="KW-1185">Reference proteome</keyword>
<keyword id="KW-0813">Transport</keyword>
<keyword id="KW-0862">Zinc</keyword>
<gene>
    <name type="primary">sec24</name>
    <name type="ORF">AO090003000403</name>
</gene>
<accession>Q2ULI0</accession>
<protein>
    <recommendedName>
        <fullName>Protein transport protein sec24</fullName>
    </recommendedName>
</protein>